<proteinExistence type="inferred from homology"/>
<name>WECF_ECO57</name>
<accession>Q8XAQ8</accession>
<comment type="function">
    <text evidence="1">Catalyzes the synthesis of Und-PP-GlcNAc-ManNAcA-Fuc4NAc (Lipid III), the third lipid-linked intermediate involved in ECA synthesis.</text>
</comment>
<comment type="catalytic activity">
    <reaction evidence="1">
        <text>beta-D-ManNAcA-(1-&gt;4)-alpha-D-GlcNAc-di-trans,octa-cis-undecaprenyl diphosphate + dTDP-4-acetamido-4,6-dideoxy-alpha-D-galactose = alpha-D-FucNAc4-(1-&gt;4)-beta-D-ManNAcA-(1-&gt;4)-D-GlcNAc-undecaprenyl diphosphate + dTDP + H(+)</text>
        <dbReference type="Rhea" id="RHEA:28759"/>
        <dbReference type="ChEBI" id="CHEBI:15378"/>
        <dbReference type="ChEBI" id="CHEBI:58369"/>
        <dbReference type="ChEBI" id="CHEBI:61495"/>
        <dbReference type="ChEBI" id="CHEBI:61496"/>
        <dbReference type="ChEBI" id="CHEBI:68493"/>
        <dbReference type="EC" id="2.4.1.325"/>
    </reaction>
</comment>
<comment type="pathway">
    <text evidence="1">Bacterial outer membrane biogenesis; enterobacterial common antigen biosynthesis.</text>
</comment>
<comment type="subcellular location">
    <subcellularLocation>
        <location evidence="1">Cell inner membrane</location>
        <topology evidence="1">Peripheral membrane protein</topology>
    </subcellularLocation>
</comment>
<comment type="similarity">
    <text evidence="1">Belongs to the glycosyltransferase 56 family.</text>
</comment>
<gene>
    <name evidence="1" type="primary">wecF</name>
    <name evidence="1" type="synonym">rffT</name>
    <name type="ordered locus">Z5304</name>
    <name type="ordered locus">ECs4726</name>
</gene>
<feature type="chain" id="PRO_0000216182" description="TDP-N-acetylfucosamine:lipid II N-acetylfucosaminyltransferase">
    <location>
        <begin position="1"/>
        <end position="359"/>
    </location>
</feature>
<keyword id="KW-0997">Cell inner membrane</keyword>
<keyword id="KW-1003">Cell membrane</keyword>
<keyword id="KW-0328">Glycosyltransferase</keyword>
<keyword id="KW-0472">Membrane</keyword>
<keyword id="KW-1185">Reference proteome</keyword>
<keyword id="KW-0808">Transferase</keyword>
<organism>
    <name type="scientific">Escherichia coli O157:H7</name>
    <dbReference type="NCBI Taxonomy" id="83334"/>
    <lineage>
        <taxon>Bacteria</taxon>
        <taxon>Pseudomonadati</taxon>
        <taxon>Pseudomonadota</taxon>
        <taxon>Gammaproteobacteria</taxon>
        <taxon>Enterobacterales</taxon>
        <taxon>Enterobacteriaceae</taxon>
        <taxon>Escherichia</taxon>
    </lineage>
</organism>
<reference key="1">
    <citation type="journal article" date="2001" name="Nature">
        <title>Genome sequence of enterohaemorrhagic Escherichia coli O157:H7.</title>
        <authorList>
            <person name="Perna N.T."/>
            <person name="Plunkett G. III"/>
            <person name="Burland V."/>
            <person name="Mau B."/>
            <person name="Glasner J.D."/>
            <person name="Rose D.J."/>
            <person name="Mayhew G.F."/>
            <person name="Evans P.S."/>
            <person name="Gregor J."/>
            <person name="Kirkpatrick H.A."/>
            <person name="Posfai G."/>
            <person name="Hackett J."/>
            <person name="Klink S."/>
            <person name="Boutin A."/>
            <person name="Shao Y."/>
            <person name="Miller L."/>
            <person name="Grotbeck E.J."/>
            <person name="Davis N.W."/>
            <person name="Lim A."/>
            <person name="Dimalanta E.T."/>
            <person name="Potamousis K."/>
            <person name="Apodaca J."/>
            <person name="Anantharaman T.S."/>
            <person name="Lin J."/>
            <person name="Yen G."/>
            <person name="Schwartz D.C."/>
            <person name="Welch R.A."/>
            <person name="Blattner F.R."/>
        </authorList>
    </citation>
    <scope>NUCLEOTIDE SEQUENCE [LARGE SCALE GENOMIC DNA]</scope>
    <source>
        <strain>O157:H7 / EDL933 / ATCC 700927 / EHEC</strain>
    </source>
</reference>
<reference key="2">
    <citation type="journal article" date="2001" name="DNA Res.">
        <title>Complete genome sequence of enterohemorrhagic Escherichia coli O157:H7 and genomic comparison with a laboratory strain K-12.</title>
        <authorList>
            <person name="Hayashi T."/>
            <person name="Makino K."/>
            <person name="Ohnishi M."/>
            <person name="Kurokawa K."/>
            <person name="Ishii K."/>
            <person name="Yokoyama K."/>
            <person name="Han C.-G."/>
            <person name="Ohtsubo E."/>
            <person name="Nakayama K."/>
            <person name="Murata T."/>
            <person name="Tanaka M."/>
            <person name="Tobe T."/>
            <person name="Iida T."/>
            <person name="Takami H."/>
            <person name="Honda T."/>
            <person name="Sasakawa C."/>
            <person name="Ogasawara N."/>
            <person name="Yasunaga T."/>
            <person name="Kuhara S."/>
            <person name="Shiba T."/>
            <person name="Hattori M."/>
            <person name="Shinagawa H."/>
        </authorList>
    </citation>
    <scope>NUCLEOTIDE SEQUENCE [LARGE SCALE GENOMIC DNA]</scope>
    <source>
        <strain>O157:H7 / Sakai / RIMD 0509952 / EHEC</strain>
    </source>
</reference>
<protein>
    <recommendedName>
        <fullName evidence="1">TDP-N-acetylfucosamine:lipid II N-acetylfucosaminyltransferase</fullName>
        <ecNumber evidence="1">2.4.1.325</ecNumber>
    </recommendedName>
    <alternativeName>
        <fullName evidence="1">4-alpha-L-fucosyltransferase</fullName>
    </alternativeName>
    <alternativeName>
        <fullName evidence="1">TDP-Fuc4NAc:lipid II Fuc4NAc transferase</fullName>
        <shortName evidence="1">Fuc4NAc transferase</shortName>
    </alternativeName>
</protein>
<evidence type="ECO:0000255" key="1">
    <source>
        <dbReference type="HAMAP-Rule" id="MF_01002"/>
    </source>
</evidence>
<sequence length="359" mass="40541">MTVLIHVLGSDIPHHNRTVLRFFNDALAATSEHAREFMVVGKDDGLSDSCPALSVQFFPGKKSLAEAVIAKAKANRQQRFFFHGQFNPTLWLALLSGGIKPSQFYWHIWGADLYELSSGLRYKLFYPLRRLAQKRVGCVFATRGDLSFFAKTHPKVRGELLYFPTRMDASLNTMANDRQREGKMTILVGNSGDRSNEHIAALRAVHQQFGDTVKVVVPMGYPPHNEAYIEEVRQAGLELFSEENLQVLSEKLEFDAYLTLLRQCALGYFIFARQQGIGTLCLLIQAGIPCVLNRENPFWQDMTEQHLPVLFTTDDLNEDIVREAQRQLASVDKNTIAFFSPNYLQGWQRALAIAAGEVA</sequence>
<dbReference type="EC" id="2.4.1.325" evidence="1"/>
<dbReference type="EMBL" id="AE005174">
    <property type="protein sequence ID" value="AAG58988.1"/>
    <property type="molecule type" value="Genomic_DNA"/>
</dbReference>
<dbReference type="EMBL" id="BA000007">
    <property type="protein sequence ID" value="BAB38149.1"/>
    <property type="molecule type" value="Genomic_DNA"/>
</dbReference>
<dbReference type="PIR" id="F91219">
    <property type="entry name" value="F91219"/>
</dbReference>
<dbReference type="PIR" id="H86065">
    <property type="entry name" value="H86065"/>
</dbReference>
<dbReference type="RefSeq" id="NP_312753.1">
    <property type="nucleotide sequence ID" value="NC_002695.1"/>
</dbReference>
<dbReference type="RefSeq" id="WP_000217252.1">
    <property type="nucleotide sequence ID" value="NZ_SDVX01000004.1"/>
</dbReference>
<dbReference type="SMR" id="Q8XAQ8"/>
<dbReference type="STRING" id="155864.Z5304"/>
<dbReference type="CAZy" id="GT56">
    <property type="family name" value="Glycosyltransferase Family 56"/>
</dbReference>
<dbReference type="GeneID" id="915126"/>
<dbReference type="KEGG" id="ece:Z5304"/>
<dbReference type="KEGG" id="ecs:ECs_4726"/>
<dbReference type="PATRIC" id="fig|386585.9.peg.4930"/>
<dbReference type="eggNOG" id="COG0554">
    <property type="taxonomic scope" value="Bacteria"/>
</dbReference>
<dbReference type="HOGENOM" id="CLU_066584_0_0_6"/>
<dbReference type="UniPathway" id="UPA00566"/>
<dbReference type="Proteomes" id="UP000000558">
    <property type="component" value="Chromosome"/>
</dbReference>
<dbReference type="Proteomes" id="UP000002519">
    <property type="component" value="Chromosome"/>
</dbReference>
<dbReference type="GO" id="GO:0005886">
    <property type="term" value="C:plasma membrane"/>
    <property type="evidence" value="ECO:0007669"/>
    <property type="project" value="UniProtKB-SubCell"/>
</dbReference>
<dbReference type="GO" id="GO:0102031">
    <property type="term" value="F:4-acetamido-4,6-dideoxy-D-galactose transferase activity"/>
    <property type="evidence" value="ECO:0007669"/>
    <property type="project" value="UniProtKB-EC"/>
</dbReference>
<dbReference type="GO" id="GO:0008417">
    <property type="term" value="F:fucosyltransferase activity"/>
    <property type="evidence" value="ECO:0007669"/>
    <property type="project" value="InterPro"/>
</dbReference>
<dbReference type="GO" id="GO:0009246">
    <property type="term" value="P:enterobacterial common antigen biosynthetic process"/>
    <property type="evidence" value="ECO:0007669"/>
    <property type="project" value="UniProtKB-UniRule"/>
</dbReference>
<dbReference type="GO" id="GO:0036065">
    <property type="term" value="P:fucosylation"/>
    <property type="evidence" value="ECO:0007669"/>
    <property type="project" value="InterPro"/>
</dbReference>
<dbReference type="HAMAP" id="MF_01002">
    <property type="entry name" value="WecF_RffT"/>
    <property type="match status" value="1"/>
</dbReference>
<dbReference type="InterPro" id="IPR009993">
    <property type="entry name" value="WecF"/>
</dbReference>
<dbReference type="NCBIfam" id="NF002752">
    <property type="entry name" value="PRK02797.1-1"/>
    <property type="match status" value="1"/>
</dbReference>
<dbReference type="NCBIfam" id="NF002753">
    <property type="entry name" value="PRK02797.1-2"/>
    <property type="match status" value="1"/>
</dbReference>
<dbReference type="NCBIfam" id="NF002754">
    <property type="entry name" value="PRK02797.1-3"/>
    <property type="match status" value="1"/>
</dbReference>
<dbReference type="Pfam" id="PF07429">
    <property type="entry name" value="Glyco_transf_56"/>
    <property type="match status" value="1"/>
</dbReference>